<organism>
    <name type="scientific">Rattus norvegicus</name>
    <name type="common">Rat</name>
    <dbReference type="NCBI Taxonomy" id="10116"/>
    <lineage>
        <taxon>Eukaryota</taxon>
        <taxon>Metazoa</taxon>
        <taxon>Chordata</taxon>
        <taxon>Craniata</taxon>
        <taxon>Vertebrata</taxon>
        <taxon>Euteleostomi</taxon>
        <taxon>Mammalia</taxon>
        <taxon>Eutheria</taxon>
        <taxon>Euarchontoglires</taxon>
        <taxon>Glires</taxon>
        <taxon>Rodentia</taxon>
        <taxon>Myomorpha</taxon>
        <taxon>Muroidea</taxon>
        <taxon>Muridae</taxon>
        <taxon>Murinae</taxon>
        <taxon>Rattus</taxon>
    </lineage>
</organism>
<sequence>MAEDGPQKQQLDMPLVLDQDLTKQMRLRVESLKQRGEKKQDGEKLLRPAESVYRLDFIQQQKLQFDHWNVVLDKPGKVTITGTSQNWTPDLTNLMTRQLLDPAAIFWRKEDSDAMDWNEADALEFGERLSDLAKIRKVMYFLITFGEGVEPANLKASVVFNQL</sequence>
<comment type="function">
    <text>May act as a modulator of the olfactory signal-transduction cascade.</text>
</comment>
<comment type="subunit">
    <text evidence="1">Interacts with BEX1 and BEX2.</text>
</comment>
<comment type="subcellular location">
    <subcellularLocation>
        <location>Cytoplasm</location>
    </subcellularLocation>
</comment>
<comment type="tissue specificity">
    <text>Uniquely associated with mature olfactory receptor neurons.</text>
</comment>
<comment type="similarity">
    <text evidence="3">Belongs to the olfactory marker protein family.</text>
</comment>
<evidence type="ECO:0000250" key="1"/>
<evidence type="ECO:0000269" key="2">
    <source>
    </source>
</evidence>
<evidence type="ECO:0000305" key="3"/>
<evidence type="ECO:0007829" key="4">
    <source>
        <dbReference type="PDB" id="1JYT"/>
    </source>
</evidence>
<evidence type="ECO:0007829" key="5">
    <source>
        <dbReference type="PDB" id="1ZRI"/>
    </source>
</evidence>
<accession>P08523</accession>
<gene>
    <name type="primary">Omp</name>
</gene>
<protein>
    <recommendedName>
        <fullName>Olfactory marker protein</fullName>
    </recommendedName>
    <alternativeName>
        <fullName>Olfactory neuronal-specific protein</fullName>
    </alternativeName>
</protein>
<keyword id="KW-0002">3D-structure</keyword>
<keyword id="KW-0007">Acetylation</keyword>
<keyword id="KW-0963">Cytoplasm</keyword>
<keyword id="KW-0903">Direct protein sequencing</keyword>
<keyword id="KW-0552">Olfaction</keyword>
<keyword id="KW-1185">Reference proteome</keyword>
<keyword id="KW-0716">Sensory transduction</keyword>
<name>OMP_RAT</name>
<feature type="initiator methionine" description="Removed" evidence="2">
    <location>
        <position position="1"/>
    </location>
</feature>
<feature type="chain" id="PRO_0000058046" description="Olfactory marker protein">
    <location>
        <begin position="2"/>
        <end position="163"/>
    </location>
</feature>
<feature type="modified residue" description="N-acetylalanine" evidence="2">
    <location>
        <position position="2"/>
    </location>
</feature>
<feature type="strand" evidence="4">
    <location>
        <begin position="4"/>
        <end position="8"/>
    </location>
</feature>
<feature type="helix" evidence="4">
    <location>
        <begin position="19"/>
        <end position="33"/>
    </location>
</feature>
<feature type="turn" evidence="4">
    <location>
        <begin position="36"/>
        <end position="38"/>
    </location>
</feature>
<feature type="strand" evidence="4">
    <location>
        <begin position="53"/>
        <end position="56"/>
    </location>
</feature>
<feature type="strand" evidence="5">
    <location>
        <begin position="59"/>
        <end position="62"/>
    </location>
</feature>
<feature type="strand" evidence="4">
    <location>
        <begin position="69"/>
        <end position="71"/>
    </location>
</feature>
<feature type="strand" evidence="4">
    <location>
        <begin position="73"/>
        <end position="81"/>
    </location>
</feature>
<feature type="turn" evidence="4">
    <location>
        <begin position="89"/>
        <end position="91"/>
    </location>
</feature>
<feature type="strand" evidence="4">
    <location>
        <begin position="97"/>
        <end position="99"/>
    </location>
</feature>
<feature type="strand" evidence="4">
    <location>
        <begin position="103"/>
        <end position="109"/>
    </location>
</feature>
<feature type="turn" evidence="4">
    <location>
        <begin position="110"/>
        <end position="112"/>
    </location>
</feature>
<feature type="strand" evidence="4">
    <location>
        <begin position="113"/>
        <end position="118"/>
    </location>
</feature>
<feature type="helix" evidence="4">
    <location>
        <begin position="119"/>
        <end position="134"/>
    </location>
</feature>
<feature type="strand" evidence="4">
    <location>
        <begin position="138"/>
        <end position="144"/>
    </location>
</feature>
<feature type="strand" evidence="4">
    <location>
        <begin position="155"/>
        <end position="157"/>
    </location>
</feature>
<dbReference type="EMBL" id="M15644">
    <property type="protein sequence ID" value="AAA41757.1"/>
    <property type="molecule type" value="mRNA"/>
</dbReference>
<dbReference type="EMBL" id="M26926">
    <property type="protein sequence ID" value="AAA03054.1"/>
    <property type="molecule type" value="Unassigned_DNA"/>
</dbReference>
<dbReference type="PIR" id="A27450">
    <property type="entry name" value="A27450"/>
</dbReference>
<dbReference type="RefSeq" id="NP_036748.1">
    <property type="nucleotide sequence ID" value="NM_012616.1"/>
</dbReference>
<dbReference type="PDB" id="1JYT">
    <property type="method" value="NMR"/>
    <property type="chains" value="A=1-163"/>
</dbReference>
<dbReference type="PDB" id="1ZRI">
    <property type="method" value="NMR"/>
    <property type="chains" value="A=1-163"/>
</dbReference>
<dbReference type="PDBsum" id="1JYT"/>
<dbReference type="PDBsum" id="1ZRI"/>
<dbReference type="BMRB" id="P08523"/>
<dbReference type="SMR" id="P08523"/>
<dbReference type="BioGRID" id="246751">
    <property type="interactions" value="1"/>
</dbReference>
<dbReference type="FunCoup" id="P08523">
    <property type="interactions" value="3"/>
</dbReference>
<dbReference type="iPTMnet" id="P08523"/>
<dbReference type="PhosphoSitePlus" id="P08523"/>
<dbReference type="Ensembl" id="ENSRNOT00000118298.1">
    <property type="protein sequence ID" value="ENSRNOP00000078319.1"/>
    <property type="gene ID" value="ENSRNOG00000068492.1"/>
</dbReference>
<dbReference type="GeneID" id="24612"/>
<dbReference type="KEGG" id="rno:24612"/>
<dbReference type="UCSC" id="RGD:3231">
    <property type="organism name" value="rat"/>
</dbReference>
<dbReference type="AGR" id="RGD:3231"/>
<dbReference type="CTD" id="4975"/>
<dbReference type="RGD" id="3231">
    <property type="gene designation" value="Omp"/>
</dbReference>
<dbReference type="GeneTree" id="ENSGT00390000009497"/>
<dbReference type="InParanoid" id="P08523"/>
<dbReference type="OMA" id="LRFSHWT"/>
<dbReference type="OrthoDB" id="9867220at2759"/>
<dbReference type="PhylomeDB" id="P08523"/>
<dbReference type="EvolutionaryTrace" id="P08523"/>
<dbReference type="PRO" id="PR:P08523"/>
<dbReference type="Proteomes" id="UP000002494">
    <property type="component" value="Chromosome 1"/>
</dbReference>
<dbReference type="GO" id="GO:0001669">
    <property type="term" value="C:acrosomal vesicle"/>
    <property type="evidence" value="ECO:0000314"/>
    <property type="project" value="RGD"/>
</dbReference>
<dbReference type="GO" id="GO:0030424">
    <property type="term" value="C:axon"/>
    <property type="evidence" value="ECO:0000314"/>
    <property type="project" value="RGD"/>
</dbReference>
<dbReference type="GO" id="GO:0005737">
    <property type="term" value="C:cytoplasm"/>
    <property type="evidence" value="ECO:0000314"/>
    <property type="project" value="CAFA"/>
</dbReference>
<dbReference type="GO" id="GO:0005829">
    <property type="term" value="C:cytosol"/>
    <property type="evidence" value="ECO:0000266"/>
    <property type="project" value="RGD"/>
</dbReference>
<dbReference type="GO" id="GO:0030425">
    <property type="term" value="C:dendrite"/>
    <property type="evidence" value="ECO:0000314"/>
    <property type="project" value="RGD"/>
</dbReference>
<dbReference type="GO" id="GO:0098788">
    <property type="term" value="C:dendritic knob"/>
    <property type="evidence" value="ECO:0000314"/>
    <property type="project" value="RGD"/>
</dbReference>
<dbReference type="GO" id="GO:0043025">
    <property type="term" value="C:neuronal cell body"/>
    <property type="evidence" value="ECO:0000314"/>
    <property type="project" value="CAFA"/>
</dbReference>
<dbReference type="GO" id="GO:0005634">
    <property type="term" value="C:nucleus"/>
    <property type="evidence" value="ECO:0000314"/>
    <property type="project" value="CAFA"/>
</dbReference>
<dbReference type="GO" id="GO:0097225">
    <property type="term" value="C:sperm midpiece"/>
    <property type="evidence" value="ECO:0000314"/>
    <property type="project" value="RGD"/>
</dbReference>
<dbReference type="GO" id="GO:0042277">
    <property type="term" value="F:peptide binding"/>
    <property type="evidence" value="ECO:0000314"/>
    <property type="project" value="RGD"/>
</dbReference>
<dbReference type="GO" id="GO:0022008">
    <property type="term" value="P:neurogenesis"/>
    <property type="evidence" value="ECO:0000266"/>
    <property type="project" value="RGD"/>
</dbReference>
<dbReference type="GO" id="GO:0007608">
    <property type="term" value="P:sensory perception of smell"/>
    <property type="evidence" value="ECO:0000266"/>
    <property type="project" value="RGD"/>
</dbReference>
<dbReference type="GO" id="GO:0007165">
    <property type="term" value="P:signal transduction"/>
    <property type="evidence" value="ECO:0007669"/>
    <property type="project" value="InterPro"/>
</dbReference>
<dbReference type="DisProt" id="DP00279"/>
<dbReference type="FunFam" id="2.60.120.390:FF:000001">
    <property type="entry name" value="Olfactory marker protein"/>
    <property type="match status" value="1"/>
</dbReference>
<dbReference type="Gene3D" id="2.60.120.390">
    <property type="entry name" value="Olfactory marker"/>
    <property type="match status" value="1"/>
</dbReference>
<dbReference type="InterPro" id="IPR009103">
    <property type="entry name" value="Olfactory_marker"/>
</dbReference>
<dbReference type="InterPro" id="IPR036727">
    <property type="entry name" value="Olfactory_marker_sf"/>
</dbReference>
<dbReference type="PANTHER" id="PTHR15357">
    <property type="entry name" value="OLFACTORY MARKER PROTEIN"/>
    <property type="match status" value="1"/>
</dbReference>
<dbReference type="PANTHER" id="PTHR15357:SF0">
    <property type="entry name" value="OLFACTORY MARKER PROTEIN"/>
    <property type="match status" value="1"/>
</dbReference>
<dbReference type="Pfam" id="PF06554">
    <property type="entry name" value="Olfactory_mark"/>
    <property type="match status" value="1"/>
</dbReference>
<dbReference type="SUPFAM" id="SSF63697">
    <property type="entry name" value="Olfactory marker protein"/>
    <property type="match status" value="1"/>
</dbReference>
<reference key="1">
    <citation type="journal article" date="1987" name="Proc. Natl. Acad. Sci. U.S.A.">
        <title>Molecular cloning and sequencing of a cDNA for olfactory marker protein.</title>
        <authorList>
            <person name="Rogers K.E."/>
            <person name="Dasgupta P."/>
            <person name="Gubler U."/>
            <person name="Grillo M."/>
            <person name="Khew-Goodall Y.S."/>
            <person name="Margolis F.L."/>
        </authorList>
    </citation>
    <scope>NUCLEOTIDE SEQUENCE [MRNA]</scope>
</reference>
<reference key="2">
    <citation type="journal article" date="1989" name="Proc. Natl. Acad. Sci. U.S.A.">
        <title>Olfactory marker protein gene: its structure and olfactory neuron-specific expression in transgenic mice.</title>
        <authorList>
            <person name="Danciger E."/>
            <person name="Mettling C."/>
            <person name="Vidal M."/>
            <person name="Morris R."/>
            <person name="Margolis F.L."/>
        </authorList>
    </citation>
    <scope>NUCLEOTIDE SEQUENCE</scope>
</reference>
<reference key="3">
    <citation type="journal article" date="1986" name="Arch. Biochem. Biophys.">
        <title>Amino acid sequence of a unique neuronal protein: rat olfactory marker protein.</title>
        <authorList>
            <person name="Sydor W."/>
            <person name="Teitelbaum Z."/>
            <person name="Blacher R."/>
            <person name="Sun S."/>
            <person name="Benz W."/>
            <person name="Margolis F.L."/>
        </authorList>
    </citation>
    <scope>PROTEIN SEQUENCE OF 2-163</scope>
    <scope>CLEAVAGE OF INITIATOR METHIONINE</scope>
    <scope>ACETYLATION AT ALA-2</scope>
</reference>
<reference key="4">
    <citation type="journal article" date="2002" name="J. Mol. Biol.">
        <title>Olfactory marker protein (OMP) exhibits a beta-clam fold in solution: implications for target peptide interaction and olfactory signal transduction.</title>
        <authorList>
            <person name="Baldisseri D.M."/>
            <person name="Margolis J.W."/>
            <person name="Weber D.J."/>
            <person name="Koo J.H."/>
            <person name="Margolis F.L."/>
        </authorList>
    </citation>
    <scope>STRUCTURE BY NMR</scope>
</reference>
<proteinExistence type="evidence at protein level"/>